<protein>
    <recommendedName>
        <fullName>Probable proteasome subunit alpha type-6</fullName>
    </recommendedName>
</protein>
<sequence>MFRNQYDGDATTWSPQGRLHQVEYALEAIKQGSATVGLVSKTHAVLVALKRNAEELSSYQKKLIRIDDHIGIAIAGLAPDARVLSNYMKQEALSSKTLFTRPIPVRRLMSKVAEKAQINTQEYGRRPYGVGFLVIGYDESGPHLLEFQPSGLVLEYLGTSMGSRSQSARTYIERNLDTFPDSSREELILSALRALRDTLSKDQELTEENVSISVIGKDEKYTLYDQNDTKEWLDKLGDKGPAAARASRAAAEEPQAPTAEAILDSADAMETD</sequence>
<name>PSA6_SCHPO</name>
<reference key="1">
    <citation type="journal article" date="2002" name="Nature">
        <title>The genome sequence of Schizosaccharomyces pombe.</title>
        <authorList>
            <person name="Wood V."/>
            <person name="Gwilliam R."/>
            <person name="Rajandream M.A."/>
            <person name="Lyne M.H."/>
            <person name="Lyne R."/>
            <person name="Stewart A."/>
            <person name="Sgouros J.G."/>
            <person name="Peat N."/>
            <person name="Hayles J."/>
            <person name="Baker S.G."/>
            <person name="Basham D."/>
            <person name="Bowman S."/>
            <person name="Brooks K."/>
            <person name="Brown D."/>
            <person name="Brown S."/>
            <person name="Chillingworth T."/>
            <person name="Churcher C.M."/>
            <person name="Collins M."/>
            <person name="Connor R."/>
            <person name="Cronin A."/>
            <person name="Davis P."/>
            <person name="Feltwell T."/>
            <person name="Fraser A."/>
            <person name="Gentles S."/>
            <person name="Goble A."/>
            <person name="Hamlin N."/>
            <person name="Harris D.E."/>
            <person name="Hidalgo J."/>
            <person name="Hodgson G."/>
            <person name="Holroyd S."/>
            <person name="Hornsby T."/>
            <person name="Howarth S."/>
            <person name="Huckle E.J."/>
            <person name="Hunt S."/>
            <person name="Jagels K."/>
            <person name="James K.D."/>
            <person name="Jones L."/>
            <person name="Jones M."/>
            <person name="Leather S."/>
            <person name="McDonald S."/>
            <person name="McLean J."/>
            <person name="Mooney P."/>
            <person name="Moule S."/>
            <person name="Mungall K.L."/>
            <person name="Murphy L.D."/>
            <person name="Niblett D."/>
            <person name="Odell C."/>
            <person name="Oliver K."/>
            <person name="O'Neil S."/>
            <person name="Pearson D."/>
            <person name="Quail M.A."/>
            <person name="Rabbinowitsch E."/>
            <person name="Rutherford K.M."/>
            <person name="Rutter S."/>
            <person name="Saunders D."/>
            <person name="Seeger K."/>
            <person name="Sharp S."/>
            <person name="Skelton J."/>
            <person name="Simmonds M.N."/>
            <person name="Squares R."/>
            <person name="Squares S."/>
            <person name="Stevens K."/>
            <person name="Taylor K."/>
            <person name="Taylor R.G."/>
            <person name="Tivey A."/>
            <person name="Walsh S.V."/>
            <person name="Warren T."/>
            <person name="Whitehead S."/>
            <person name="Woodward J.R."/>
            <person name="Volckaert G."/>
            <person name="Aert R."/>
            <person name="Robben J."/>
            <person name="Grymonprez B."/>
            <person name="Weltjens I."/>
            <person name="Vanstreels E."/>
            <person name="Rieger M."/>
            <person name="Schaefer M."/>
            <person name="Mueller-Auer S."/>
            <person name="Gabel C."/>
            <person name="Fuchs M."/>
            <person name="Duesterhoeft A."/>
            <person name="Fritzc C."/>
            <person name="Holzer E."/>
            <person name="Moestl D."/>
            <person name="Hilbert H."/>
            <person name="Borzym K."/>
            <person name="Langer I."/>
            <person name="Beck A."/>
            <person name="Lehrach H."/>
            <person name="Reinhardt R."/>
            <person name="Pohl T.M."/>
            <person name="Eger P."/>
            <person name="Zimmermann W."/>
            <person name="Wedler H."/>
            <person name="Wambutt R."/>
            <person name="Purnelle B."/>
            <person name="Goffeau A."/>
            <person name="Cadieu E."/>
            <person name="Dreano S."/>
            <person name="Gloux S."/>
            <person name="Lelaure V."/>
            <person name="Mottier S."/>
            <person name="Galibert F."/>
            <person name="Aves S.J."/>
            <person name="Xiang Z."/>
            <person name="Hunt C."/>
            <person name="Moore K."/>
            <person name="Hurst S.M."/>
            <person name="Lucas M."/>
            <person name="Rochet M."/>
            <person name="Gaillardin C."/>
            <person name="Tallada V.A."/>
            <person name="Garzon A."/>
            <person name="Thode G."/>
            <person name="Daga R.R."/>
            <person name="Cruzado L."/>
            <person name="Jimenez J."/>
            <person name="Sanchez M."/>
            <person name="del Rey F."/>
            <person name="Benito J."/>
            <person name="Dominguez A."/>
            <person name="Revuelta J.L."/>
            <person name="Moreno S."/>
            <person name="Armstrong J."/>
            <person name="Forsburg S.L."/>
            <person name="Cerutti L."/>
            <person name="Lowe T."/>
            <person name="McCombie W.R."/>
            <person name="Paulsen I."/>
            <person name="Potashkin J."/>
            <person name="Shpakovski G.V."/>
            <person name="Ussery D."/>
            <person name="Barrell B.G."/>
            <person name="Nurse P."/>
        </authorList>
    </citation>
    <scope>NUCLEOTIDE SEQUENCE [LARGE SCALE GENOMIC DNA]</scope>
    <source>
        <strain>972 / ATCC 24843</strain>
    </source>
</reference>
<reference key="2">
    <citation type="journal article" date="2006" name="Nat. Biotechnol.">
        <title>ORFeome cloning and global analysis of protein localization in the fission yeast Schizosaccharomyces pombe.</title>
        <authorList>
            <person name="Matsuyama A."/>
            <person name="Arai R."/>
            <person name="Yashiroda Y."/>
            <person name="Shirai A."/>
            <person name="Kamata A."/>
            <person name="Sekido S."/>
            <person name="Kobayashi Y."/>
            <person name="Hashimoto A."/>
            <person name="Hamamoto M."/>
            <person name="Hiraoka Y."/>
            <person name="Horinouchi S."/>
            <person name="Yoshida M."/>
        </authorList>
    </citation>
    <scope>SUBCELLULAR LOCATION [LARGE SCALE ANALYSIS]</scope>
</reference>
<dbReference type="EMBL" id="CU329670">
    <property type="protein sequence ID" value="CAB11290.1"/>
    <property type="molecule type" value="Genomic_DNA"/>
</dbReference>
<dbReference type="PIR" id="T39054">
    <property type="entry name" value="T39054"/>
</dbReference>
<dbReference type="SMR" id="O14250"/>
<dbReference type="BioGRID" id="279015">
    <property type="interactions" value="12"/>
</dbReference>
<dbReference type="ComplexPortal" id="CPX-9077">
    <property type="entry name" value="26S proteasome complex"/>
</dbReference>
<dbReference type="FunCoup" id="O14250">
    <property type="interactions" value="599"/>
</dbReference>
<dbReference type="STRING" id="284812.O14250"/>
<dbReference type="MEROPS" id="T01.976"/>
<dbReference type="iPTMnet" id="O14250"/>
<dbReference type="SwissPalm" id="O14250"/>
<dbReference type="PaxDb" id="4896-SPAC6G10.04c.1"/>
<dbReference type="EnsemblFungi" id="SPAC6G10.04c.1">
    <property type="protein sequence ID" value="SPAC6G10.04c.1:pep"/>
    <property type="gene ID" value="SPAC6G10.04c"/>
</dbReference>
<dbReference type="KEGG" id="spo:2542559"/>
<dbReference type="PomBase" id="SPAC6G10.04c"/>
<dbReference type="VEuPathDB" id="FungiDB:SPAC6G10.04c"/>
<dbReference type="eggNOG" id="KOG0863">
    <property type="taxonomic scope" value="Eukaryota"/>
</dbReference>
<dbReference type="HOGENOM" id="CLU_035750_8_0_1"/>
<dbReference type="InParanoid" id="O14250"/>
<dbReference type="OMA" id="NTQVYGK"/>
<dbReference type="PhylomeDB" id="O14250"/>
<dbReference type="Reactome" id="R-SPO-1236978">
    <property type="pathway name" value="Cross-presentation of soluble exogenous antigens (endosomes)"/>
</dbReference>
<dbReference type="Reactome" id="R-SPO-350562">
    <property type="pathway name" value="Regulation of ornithine decarboxylase (ODC)"/>
</dbReference>
<dbReference type="Reactome" id="R-SPO-5687128">
    <property type="pathway name" value="MAPK6/MAPK4 signaling"/>
</dbReference>
<dbReference type="Reactome" id="R-SPO-5689603">
    <property type="pathway name" value="UCH proteinases"/>
</dbReference>
<dbReference type="Reactome" id="R-SPO-5689880">
    <property type="pathway name" value="Ub-specific processing proteases"/>
</dbReference>
<dbReference type="Reactome" id="R-SPO-68949">
    <property type="pathway name" value="Orc1 removal from chromatin"/>
</dbReference>
<dbReference type="Reactome" id="R-SPO-69017">
    <property type="pathway name" value="CDK-mediated phosphorylation and removal of Cdc6"/>
</dbReference>
<dbReference type="Reactome" id="R-SPO-69601">
    <property type="pathway name" value="Ubiquitin Mediated Degradation of Phosphorylated Cdc25A"/>
</dbReference>
<dbReference type="Reactome" id="R-SPO-75815">
    <property type="pathway name" value="Ubiquitin-dependent degradation of Cyclin D"/>
</dbReference>
<dbReference type="Reactome" id="R-SPO-8854050">
    <property type="pathway name" value="FBXL7 down-regulates AURKA during mitotic entry and in early mitosis"/>
</dbReference>
<dbReference type="Reactome" id="R-SPO-8948751">
    <property type="pathway name" value="Regulation of PTEN stability and activity"/>
</dbReference>
<dbReference type="Reactome" id="R-SPO-8951664">
    <property type="pathway name" value="Neddylation"/>
</dbReference>
<dbReference type="Reactome" id="R-SPO-9755511">
    <property type="pathway name" value="KEAP1-NFE2L2 pathway"/>
</dbReference>
<dbReference type="Reactome" id="R-SPO-983168">
    <property type="pathway name" value="Antigen processing: Ubiquitination &amp; Proteasome degradation"/>
</dbReference>
<dbReference type="Reactome" id="R-SPO-9907900">
    <property type="pathway name" value="Proteasome assembly"/>
</dbReference>
<dbReference type="PRO" id="PR:O14250"/>
<dbReference type="Proteomes" id="UP000002485">
    <property type="component" value="Chromosome I"/>
</dbReference>
<dbReference type="GO" id="GO:0005829">
    <property type="term" value="C:cytosol"/>
    <property type="evidence" value="ECO:0007005"/>
    <property type="project" value="PomBase"/>
</dbReference>
<dbReference type="GO" id="GO:0005634">
    <property type="term" value="C:nucleus"/>
    <property type="evidence" value="ECO:0007005"/>
    <property type="project" value="PomBase"/>
</dbReference>
<dbReference type="GO" id="GO:0019773">
    <property type="term" value="C:proteasome core complex, alpha-subunit complex"/>
    <property type="evidence" value="ECO:0000314"/>
    <property type="project" value="PomBase"/>
</dbReference>
<dbReference type="GO" id="GO:0043161">
    <property type="term" value="P:proteasome-mediated ubiquitin-dependent protein catabolic process"/>
    <property type="evidence" value="ECO:0000318"/>
    <property type="project" value="GO_Central"/>
</dbReference>
<dbReference type="CDD" id="cd03749">
    <property type="entry name" value="proteasome_alpha_type_1"/>
    <property type="match status" value="1"/>
</dbReference>
<dbReference type="FunFam" id="3.60.20.10:FF:000016">
    <property type="entry name" value="Proteasome subunit alpha type-6"/>
    <property type="match status" value="1"/>
</dbReference>
<dbReference type="Gene3D" id="3.60.20.10">
    <property type="entry name" value="Glutamine Phosphoribosylpyrophosphate, subunit 1, domain 1"/>
    <property type="match status" value="1"/>
</dbReference>
<dbReference type="InterPro" id="IPR029055">
    <property type="entry name" value="Ntn_hydrolases_N"/>
</dbReference>
<dbReference type="InterPro" id="IPR050115">
    <property type="entry name" value="Proteasome_alpha"/>
</dbReference>
<dbReference type="InterPro" id="IPR023332">
    <property type="entry name" value="Proteasome_alpha-type"/>
</dbReference>
<dbReference type="InterPro" id="IPR035144">
    <property type="entry name" value="Proteasome_alpha1"/>
</dbReference>
<dbReference type="InterPro" id="IPR000426">
    <property type="entry name" value="Proteasome_asu_N"/>
</dbReference>
<dbReference type="InterPro" id="IPR001353">
    <property type="entry name" value="Proteasome_sua/b"/>
</dbReference>
<dbReference type="PANTHER" id="PTHR11599">
    <property type="entry name" value="PROTEASOME SUBUNIT ALPHA/BETA"/>
    <property type="match status" value="1"/>
</dbReference>
<dbReference type="Pfam" id="PF00227">
    <property type="entry name" value="Proteasome"/>
    <property type="match status" value="1"/>
</dbReference>
<dbReference type="Pfam" id="PF10584">
    <property type="entry name" value="Proteasome_A_N"/>
    <property type="match status" value="1"/>
</dbReference>
<dbReference type="SMART" id="SM00948">
    <property type="entry name" value="Proteasome_A_N"/>
    <property type="match status" value="1"/>
</dbReference>
<dbReference type="SUPFAM" id="SSF56235">
    <property type="entry name" value="N-terminal nucleophile aminohydrolases (Ntn hydrolases)"/>
    <property type="match status" value="1"/>
</dbReference>
<dbReference type="PROSITE" id="PS00388">
    <property type="entry name" value="PROTEASOME_ALPHA_1"/>
    <property type="match status" value="1"/>
</dbReference>
<dbReference type="PROSITE" id="PS51475">
    <property type="entry name" value="PROTEASOME_ALPHA_2"/>
    <property type="match status" value="1"/>
</dbReference>
<feature type="chain" id="PRO_0000124075" description="Probable proteasome subunit alpha type-6">
    <location>
        <begin position="1"/>
        <end position="272"/>
    </location>
</feature>
<feature type="region of interest" description="Disordered" evidence="3">
    <location>
        <begin position="243"/>
        <end position="272"/>
    </location>
</feature>
<feature type="compositionally biased region" description="Low complexity" evidence="3">
    <location>
        <begin position="243"/>
        <end position="261"/>
    </location>
</feature>
<proteinExistence type="inferred from homology"/>
<comment type="function">
    <text evidence="1">The proteasome is a multicatalytic proteinase complex which is characterized by its ability to cleave peptides with Arg, Phe, Tyr, Leu, and Glu adjacent to the leaving group at neutral or slightly basic pH. The proteasome has an ATP-dependent proteolytic activity (By similarity).</text>
</comment>
<comment type="subunit">
    <text evidence="1">The 26S proteasome consists of a 20S proteasome core and two 19S regulatory subunits. The 20S proteasome core is composed of 28 subunits that are arranged in four stacked rings, resulting in a barrel-shaped structure. The two end rings are each formed by seven alpha subunits, and the two central rings are each formed by seven beta subunits. The catalytic chamber with the active sites is on the inside of the barrel (By similarity).</text>
</comment>
<comment type="subcellular location">
    <subcellularLocation>
        <location evidence="4">Cytoplasm</location>
    </subcellularLocation>
    <subcellularLocation>
        <location evidence="4">Nucleus</location>
    </subcellularLocation>
</comment>
<comment type="similarity">
    <text evidence="2">Belongs to the peptidase T1A family.</text>
</comment>
<accession>O14250</accession>
<organism>
    <name type="scientific">Schizosaccharomyces pombe (strain 972 / ATCC 24843)</name>
    <name type="common">Fission yeast</name>
    <dbReference type="NCBI Taxonomy" id="284812"/>
    <lineage>
        <taxon>Eukaryota</taxon>
        <taxon>Fungi</taxon>
        <taxon>Dikarya</taxon>
        <taxon>Ascomycota</taxon>
        <taxon>Taphrinomycotina</taxon>
        <taxon>Schizosaccharomycetes</taxon>
        <taxon>Schizosaccharomycetales</taxon>
        <taxon>Schizosaccharomycetaceae</taxon>
        <taxon>Schizosaccharomyces</taxon>
    </lineage>
</organism>
<evidence type="ECO:0000250" key="1"/>
<evidence type="ECO:0000255" key="2">
    <source>
        <dbReference type="PROSITE-ProRule" id="PRU00808"/>
    </source>
</evidence>
<evidence type="ECO:0000256" key="3">
    <source>
        <dbReference type="SAM" id="MobiDB-lite"/>
    </source>
</evidence>
<evidence type="ECO:0000269" key="4">
    <source>
    </source>
</evidence>
<gene>
    <name type="ORF">SPAC6G10.04c</name>
</gene>
<keyword id="KW-0963">Cytoplasm</keyword>
<keyword id="KW-0539">Nucleus</keyword>
<keyword id="KW-0647">Proteasome</keyword>
<keyword id="KW-1185">Reference proteome</keyword>